<comment type="function">
    <text evidence="1">Involved in pre-mRNA splicing.</text>
</comment>
<comment type="subunit">
    <text evidence="1">Associated with the spliceosome.</text>
</comment>
<comment type="subcellular location">
    <subcellularLocation>
        <location evidence="1">Nucleus</location>
    </subcellularLocation>
</comment>
<comment type="similarity">
    <text evidence="5">Belongs to the CWC24 family.</text>
</comment>
<gene>
    <name type="primary">CWC24</name>
    <name type="ORF">UMAG_05163</name>
</gene>
<proteinExistence type="inferred from homology"/>
<evidence type="ECO:0000250" key="1"/>
<evidence type="ECO:0000255" key="2">
    <source>
        <dbReference type="PROSITE-ProRule" id="PRU00175"/>
    </source>
</evidence>
<evidence type="ECO:0000255" key="3">
    <source>
        <dbReference type="PROSITE-ProRule" id="PRU00723"/>
    </source>
</evidence>
<evidence type="ECO:0000256" key="4">
    <source>
        <dbReference type="SAM" id="MobiDB-lite"/>
    </source>
</evidence>
<evidence type="ECO:0000305" key="5"/>
<keyword id="KW-0238">DNA-binding</keyword>
<keyword id="KW-0479">Metal-binding</keyword>
<keyword id="KW-0507">mRNA processing</keyword>
<keyword id="KW-0508">mRNA splicing</keyword>
<keyword id="KW-0539">Nucleus</keyword>
<keyword id="KW-1185">Reference proteome</keyword>
<keyword id="KW-0747">Spliceosome</keyword>
<keyword id="KW-0862">Zinc</keyword>
<keyword id="KW-0863">Zinc-finger</keyword>
<organism>
    <name type="scientific">Mycosarcoma maydis</name>
    <name type="common">Corn smut fungus</name>
    <name type="synonym">Ustilago maydis</name>
    <dbReference type="NCBI Taxonomy" id="5270"/>
    <lineage>
        <taxon>Eukaryota</taxon>
        <taxon>Fungi</taxon>
        <taxon>Dikarya</taxon>
        <taxon>Basidiomycota</taxon>
        <taxon>Ustilaginomycotina</taxon>
        <taxon>Ustilaginomycetes</taxon>
        <taxon>Ustilaginales</taxon>
        <taxon>Ustilaginaceae</taxon>
        <taxon>Mycosarcoma</taxon>
    </lineage>
</organism>
<accession>Q4P400</accession>
<accession>A0A0D1E6T0</accession>
<sequence>MDGATESGAASSPVVVFKRKRGRASQGTSSTLTNVATSSQAGPSGASRAHSDSGSSRSDSESGSTVVIKKKRRSANPLVQSTGRVYRKLKLSGSLDGEKENSVDADESGDAGLTSSSIASSSLQKMREDATRNSDWDLDTAGTLKETGVTSNSDGLYRGAKSYASFTRTRDDGCSSKMRSRGPIRQTTTVRTTSLIDYQPDVCKDYKETGYCGFGDTCKFLHDRSDYLAGWQLDVLPNSSSRTRENMLSDPEDSDTEDDIPFACLICRKAFTDPVVTRCAHYFCSSCAIKRFAKNSKCFACGQQTGGLFNSAKKVLERMDKLKQQKAQLRREKHEWLQDPQPTHQLATAGDSDVD</sequence>
<protein>
    <recommendedName>
        <fullName>Pre-mRNA-splicing factor CWC24</fullName>
    </recommendedName>
</protein>
<reference key="1">
    <citation type="journal article" date="2006" name="Nature">
        <title>Insights from the genome of the biotrophic fungal plant pathogen Ustilago maydis.</title>
        <authorList>
            <person name="Kaemper J."/>
            <person name="Kahmann R."/>
            <person name="Boelker M."/>
            <person name="Ma L.-J."/>
            <person name="Brefort T."/>
            <person name="Saville B.J."/>
            <person name="Banuett F."/>
            <person name="Kronstad J.W."/>
            <person name="Gold S.E."/>
            <person name="Mueller O."/>
            <person name="Perlin M.H."/>
            <person name="Woesten H.A.B."/>
            <person name="de Vries R."/>
            <person name="Ruiz-Herrera J."/>
            <person name="Reynaga-Pena C.G."/>
            <person name="Snetselaar K."/>
            <person name="McCann M."/>
            <person name="Perez-Martin J."/>
            <person name="Feldbruegge M."/>
            <person name="Basse C.W."/>
            <person name="Steinberg G."/>
            <person name="Ibeas J.I."/>
            <person name="Holloman W."/>
            <person name="Guzman P."/>
            <person name="Farman M.L."/>
            <person name="Stajich J.E."/>
            <person name="Sentandreu R."/>
            <person name="Gonzalez-Prieto J.M."/>
            <person name="Kennell J.C."/>
            <person name="Molina L."/>
            <person name="Schirawski J."/>
            <person name="Mendoza-Mendoza A."/>
            <person name="Greilinger D."/>
            <person name="Muench K."/>
            <person name="Roessel N."/>
            <person name="Scherer M."/>
            <person name="Vranes M."/>
            <person name="Ladendorf O."/>
            <person name="Vincon V."/>
            <person name="Fuchs U."/>
            <person name="Sandrock B."/>
            <person name="Meng S."/>
            <person name="Ho E.C.H."/>
            <person name="Cahill M.J."/>
            <person name="Boyce K.J."/>
            <person name="Klose J."/>
            <person name="Klosterman S.J."/>
            <person name="Deelstra H.J."/>
            <person name="Ortiz-Castellanos L."/>
            <person name="Li W."/>
            <person name="Sanchez-Alonso P."/>
            <person name="Schreier P.H."/>
            <person name="Haeuser-Hahn I."/>
            <person name="Vaupel M."/>
            <person name="Koopmann E."/>
            <person name="Friedrich G."/>
            <person name="Voss H."/>
            <person name="Schlueter T."/>
            <person name="Margolis J."/>
            <person name="Platt D."/>
            <person name="Swimmer C."/>
            <person name="Gnirke A."/>
            <person name="Chen F."/>
            <person name="Vysotskaia V."/>
            <person name="Mannhaupt G."/>
            <person name="Gueldener U."/>
            <person name="Muensterkoetter M."/>
            <person name="Haase D."/>
            <person name="Oesterheld M."/>
            <person name="Mewes H.-W."/>
            <person name="Mauceli E.W."/>
            <person name="DeCaprio D."/>
            <person name="Wade C.M."/>
            <person name="Butler J."/>
            <person name="Young S.K."/>
            <person name="Jaffe D.B."/>
            <person name="Calvo S.E."/>
            <person name="Nusbaum C."/>
            <person name="Galagan J.E."/>
            <person name="Birren B.W."/>
        </authorList>
    </citation>
    <scope>NUCLEOTIDE SEQUENCE [LARGE SCALE GENOMIC DNA]</scope>
    <source>
        <strain>DSM 14603 / FGSC 9021 / UM521</strain>
    </source>
</reference>
<reference key="2">
    <citation type="submission" date="2014-09" db="EMBL/GenBank/DDBJ databases">
        <authorList>
            <person name="Gueldener U."/>
            <person name="Muensterkoetter M."/>
            <person name="Walter M.C."/>
            <person name="Mannhaupt G."/>
            <person name="Kahmann R."/>
        </authorList>
    </citation>
    <scope>GENOME REANNOTATION</scope>
    <source>
        <strain>DSM 14603 / FGSC 9021 / UM521</strain>
    </source>
</reference>
<feature type="chain" id="PRO_0000055893" description="Pre-mRNA-splicing factor CWC24">
    <location>
        <begin position="1"/>
        <end position="355"/>
    </location>
</feature>
<feature type="zinc finger region" description="C3H1-type" evidence="3">
    <location>
        <begin position="197"/>
        <end position="225"/>
    </location>
</feature>
<feature type="zinc finger region" description="RING-type" evidence="2">
    <location>
        <begin position="264"/>
        <end position="302"/>
    </location>
</feature>
<feature type="region of interest" description="Disordered" evidence="4">
    <location>
        <begin position="1"/>
        <end position="81"/>
    </location>
</feature>
<feature type="region of interest" description="Disordered" evidence="4">
    <location>
        <begin position="94"/>
        <end position="137"/>
    </location>
</feature>
<feature type="region of interest" description="Disordered" evidence="4">
    <location>
        <begin position="330"/>
        <end position="355"/>
    </location>
</feature>
<feature type="compositionally biased region" description="Polar residues" evidence="4">
    <location>
        <begin position="25"/>
        <end position="42"/>
    </location>
</feature>
<feature type="compositionally biased region" description="Low complexity" evidence="4">
    <location>
        <begin position="44"/>
        <end position="64"/>
    </location>
</feature>
<feature type="compositionally biased region" description="Basic and acidic residues" evidence="4">
    <location>
        <begin position="125"/>
        <end position="135"/>
    </location>
</feature>
<dbReference type="EMBL" id="CM003143">
    <property type="protein sequence ID" value="KIS70090.1"/>
    <property type="molecule type" value="Genomic_DNA"/>
</dbReference>
<dbReference type="RefSeq" id="XP_011388219.1">
    <property type="nucleotide sequence ID" value="XM_011389917.1"/>
</dbReference>
<dbReference type="STRING" id="237631.Q4P400"/>
<dbReference type="EnsemblFungi" id="KIS70090">
    <property type="protein sequence ID" value="KIS70090"/>
    <property type="gene ID" value="UMAG_05163"/>
</dbReference>
<dbReference type="GeneID" id="23565129"/>
<dbReference type="KEGG" id="uma:UMAG_05163"/>
<dbReference type="VEuPathDB" id="FungiDB:UMAG_05163"/>
<dbReference type="eggNOG" id="KOG1813">
    <property type="taxonomic scope" value="Eukaryota"/>
</dbReference>
<dbReference type="HOGENOM" id="CLU_050460_0_0_1"/>
<dbReference type="InParanoid" id="Q4P400"/>
<dbReference type="OMA" id="KKQATHN"/>
<dbReference type="OrthoDB" id="25761at2759"/>
<dbReference type="Proteomes" id="UP000000561">
    <property type="component" value="Chromosome 4"/>
</dbReference>
<dbReference type="GO" id="GO:0005684">
    <property type="term" value="C:U2-type spliceosomal complex"/>
    <property type="evidence" value="ECO:0000318"/>
    <property type="project" value="GO_Central"/>
</dbReference>
<dbReference type="GO" id="GO:0003677">
    <property type="term" value="F:DNA binding"/>
    <property type="evidence" value="ECO:0007669"/>
    <property type="project" value="UniProtKB-KW"/>
</dbReference>
<dbReference type="GO" id="GO:0008270">
    <property type="term" value="F:zinc ion binding"/>
    <property type="evidence" value="ECO:0007669"/>
    <property type="project" value="UniProtKB-KW"/>
</dbReference>
<dbReference type="GO" id="GO:0006397">
    <property type="term" value="P:mRNA processing"/>
    <property type="evidence" value="ECO:0007669"/>
    <property type="project" value="UniProtKB-KW"/>
</dbReference>
<dbReference type="GO" id="GO:0034247">
    <property type="term" value="P:snoRNA splicing"/>
    <property type="evidence" value="ECO:0000318"/>
    <property type="project" value="GO_Central"/>
</dbReference>
<dbReference type="CDD" id="cd16539">
    <property type="entry name" value="RING-HC_RNF113A_B"/>
    <property type="match status" value="1"/>
</dbReference>
<dbReference type="FunFam" id="3.30.40.10:FF:000045">
    <property type="entry name" value="RING finger protein 113A"/>
    <property type="match status" value="1"/>
</dbReference>
<dbReference type="Gene3D" id="4.10.1000.10">
    <property type="entry name" value="Zinc finger, CCCH-type"/>
    <property type="match status" value="1"/>
</dbReference>
<dbReference type="Gene3D" id="3.30.40.10">
    <property type="entry name" value="Zinc/RING finger domain, C3HC4 (zinc finger)"/>
    <property type="match status" value="1"/>
</dbReference>
<dbReference type="InterPro" id="IPR039971">
    <property type="entry name" value="CWC24-like"/>
</dbReference>
<dbReference type="InterPro" id="IPR000571">
    <property type="entry name" value="Znf_CCCH"/>
</dbReference>
<dbReference type="InterPro" id="IPR036855">
    <property type="entry name" value="Znf_CCCH_sf"/>
</dbReference>
<dbReference type="InterPro" id="IPR001841">
    <property type="entry name" value="Znf_RING"/>
</dbReference>
<dbReference type="InterPro" id="IPR013083">
    <property type="entry name" value="Znf_RING/FYVE/PHD"/>
</dbReference>
<dbReference type="InterPro" id="IPR017907">
    <property type="entry name" value="Znf_RING_CS"/>
</dbReference>
<dbReference type="PANTHER" id="PTHR12930:SF0">
    <property type="entry name" value="RING FINGER PROTEIN 113B"/>
    <property type="match status" value="1"/>
</dbReference>
<dbReference type="PANTHER" id="PTHR12930">
    <property type="entry name" value="ZINC FINGER PROTEIN 183"/>
    <property type="match status" value="1"/>
</dbReference>
<dbReference type="Pfam" id="PF13920">
    <property type="entry name" value="zf-C3HC4_3"/>
    <property type="match status" value="1"/>
</dbReference>
<dbReference type="Pfam" id="PF00642">
    <property type="entry name" value="zf-CCCH"/>
    <property type="match status" value="1"/>
</dbReference>
<dbReference type="SMART" id="SM00184">
    <property type="entry name" value="RING"/>
    <property type="match status" value="1"/>
</dbReference>
<dbReference type="SMART" id="SM00356">
    <property type="entry name" value="ZnF_C3H1"/>
    <property type="match status" value="1"/>
</dbReference>
<dbReference type="SUPFAM" id="SSF90229">
    <property type="entry name" value="CCCH zinc finger"/>
    <property type="match status" value="1"/>
</dbReference>
<dbReference type="SUPFAM" id="SSF57850">
    <property type="entry name" value="RING/U-box"/>
    <property type="match status" value="1"/>
</dbReference>
<dbReference type="PROSITE" id="PS50103">
    <property type="entry name" value="ZF_C3H1"/>
    <property type="match status" value="1"/>
</dbReference>
<dbReference type="PROSITE" id="PS00518">
    <property type="entry name" value="ZF_RING_1"/>
    <property type="match status" value="1"/>
</dbReference>
<dbReference type="PROSITE" id="PS50089">
    <property type="entry name" value="ZF_RING_2"/>
    <property type="match status" value="1"/>
</dbReference>
<name>CWC24_MYCMD</name>